<gene>
    <name evidence="1" type="primary">hisS</name>
    <name type="ordered locus">sce4545</name>
</gene>
<proteinExistence type="inferred from homology"/>
<dbReference type="EC" id="6.1.1.21" evidence="1"/>
<dbReference type="EMBL" id="AM746676">
    <property type="protein sequence ID" value="CAN94708.1"/>
    <property type="molecule type" value="Genomic_DNA"/>
</dbReference>
<dbReference type="RefSeq" id="WP_012237177.1">
    <property type="nucleotide sequence ID" value="NC_010162.1"/>
</dbReference>
<dbReference type="SMR" id="A9F907"/>
<dbReference type="STRING" id="448385.sce4545"/>
<dbReference type="KEGG" id="scl:sce4545"/>
<dbReference type="eggNOG" id="COG0124">
    <property type="taxonomic scope" value="Bacteria"/>
</dbReference>
<dbReference type="HOGENOM" id="CLU_025113_1_1_7"/>
<dbReference type="OrthoDB" id="9800814at2"/>
<dbReference type="BioCyc" id="SCEL448385:SCE_RS23325-MONOMER"/>
<dbReference type="Proteomes" id="UP000002139">
    <property type="component" value="Chromosome"/>
</dbReference>
<dbReference type="GO" id="GO:0005737">
    <property type="term" value="C:cytoplasm"/>
    <property type="evidence" value="ECO:0007669"/>
    <property type="project" value="UniProtKB-SubCell"/>
</dbReference>
<dbReference type="GO" id="GO:0005524">
    <property type="term" value="F:ATP binding"/>
    <property type="evidence" value="ECO:0007669"/>
    <property type="project" value="UniProtKB-UniRule"/>
</dbReference>
<dbReference type="GO" id="GO:0004821">
    <property type="term" value="F:histidine-tRNA ligase activity"/>
    <property type="evidence" value="ECO:0007669"/>
    <property type="project" value="UniProtKB-UniRule"/>
</dbReference>
<dbReference type="GO" id="GO:0006427">
    <property type="term" value="P:histidyl-tRNA aminoacylation"/>
    <property type="evidence" value="ECO:0007669"/>
    <property type="project" value="UniProtKB-UniRule"/>
</dbReference>
<dbReference type="CDD" id="cd00773">
    <property type="entry name" value="HisRS-like_core"/>
    <property type="match status" value="1"/>
</dbReference>
<dbReference type="CDD" id="cd00859">
    <property type="entry name" value="HisRS_anticodon"/>
    <property type="match status" value="1"/>
</dbReference>
<dbReference type="Gene3D" id="3.40.50.800">
    <property type="entry name" value="Anticodon-binding domain"/>
    <property type="match status" value="1"/>
</dbReference>
<dbReference type="Gene3D" id="3.30.930.10">
    <property type="entry name" value="Bira Bifunctional Protein, Domain 2"/>
    <property type="match status" value="1"/>
</dbReference>
<dbReference type="HAMAP" id="MF_00127">
    <property type="entry name" value="His_tRNA_synth"/>
    <property type="match status" value="1"/>
</dbReference>
<dbReference type="InterPro" id="IPR006195">
    <property type="entry name" value="aa-tRNA-synth_II"/>
</dbReference>
<dbReference type="InterPro" id="IPR045864">
    <property type="entry name" value="aa-tRNA-synth_II/BPL/LPL"/>
</dbReference>
<dbReference type="InterPro" id="IPR004154">
    <property type="entry name" value="Anticodon-bd"/>
</dbReference>
<dbReference type="InterPro" id="IPR036621">
    <property type="entry name" value="Anticodon-bd_dom_sf"/>
</dbReference>
<dbReference type="InterPro" id="IPR015807">
    <property type="entry name" value="His-tRNA-ligase"/>
</dbReference>
<dbReference type="InterPro" id="IPR041715">
    <property type="entry name" value="HisRS-like_core"/>
</dbReference>
<dbReference type="InterPro" id="IPR004516">
    <property type="entry name" value="HisRS/HisZ"/>
</dbReference>
<dbReference type="InterPro" id="IPR033656">
    <property type="entry name" value="HisRS_anticodon"/>
</dbReference>
<dbReference type="NCBIfam" id="TIGR00442">
    <property type="entry name" value="hisS"/>
    <property type="match status" value="1"/>
</dbReference>
<dbReference type="PANTHER" id="PTHR43707:SF1">
    <property type="entry name" value="HISTIDINE--TRNA LIGASE, MITOCHONDRIAL-RELATED"/>
    <property type="match status" value="1"/>
</dbReference>
<dbReference type="PANTHER" id="PTHR43707">
    <property type="entry name" value="HISTIDYL-TRNA SYNTHETASE"/>
    <property type="match status" value="1"/>
</dbReference>
<dbReference type="Pfam" id="PF03129">
    <property type="entry name" value="HGTP_anticodon"/>
    <property type="match status" value="1"/>
</dbReference>
<dbReference type="Pfam" id="PF13393">
    <property type="entry name" value="tRNA-synt_His"/>
    <property type="match status" value="1"/>
</dbReference>
<dbReference type="PIRSF" id="PIRSF001549">
    <property type="entry name" value="His-tRNA_synth"/>
    <property type="match status" value="1"/>
</dbReference>
<dbReference type="SUPFAM" id="SSF52954">
    <property type="entry name" value="Class II aaRS ABD-related"/>
    <property type="match status" value="1"/>
</dbReference>
<dbReference type="SUPFAM" id="SSF55681">
    <property type="entry name" value="Class II aaRS and biotin synthetases"/>
    <property type="match status" value="1"/>
</dbReference>
<dbReference type="PROSITE" id="PS50862">
    <property type="entry name" value="AA_TRNA_LIGASE_II"/>
    <property type="match status" value="1"/>
</dbReference>
<comment type="catalytic activity">
    <reaction evidence="1">
        <text>tRNA(His) + L-histidine + ATP = L-histidyl-tRNA(His) + AMP + diphosphate + H(+)</text>
        <dbReference type="Rhea" id="RHEA:17313"/>
        <dbReference type="Rhea" id="RHEA-COMP:9665"/>
        <dbReference type="Rhea" id="RHEA-COMP:9689"/>
        <dbReference type="ChEBI" id="CHEBI:15378"/>
        <dbReference type="ChEBI" id="CHEBI:30616"/>
        <dbReference type="ChEBI" id="CHEBI:33019"/>
        <dbReference type="ChEBI" id="CHEBI:57595"/>
        <dbReference type="ChEBI" id="CHEBI:78442"/>
        <dbReference type="ChEBI" id="CHEBI:78527"/>
        <dbReference type="ChEBI" id="CHEBI:456215"/>
        <dbReference type="EC" id="6.1.1.21"/>
    </reaction>
</comment>
<comment type="subunit">
    <text evidence="1">Homodimer.</text>
</comment>
<comment type="subcellular location">
    <subcellularLocation>
        <location evidence="1">Cytoplasm</location>
    </subcellularLocation>
</comment>
<comment type="similarity">
    <text evidence="1">Belongs to the class-II aminoacyl-tRNA synthetase family.</text>
</comment>
<name>SYH_SORC5</name>
<feature type="chain" id="PRO_1000095594" description="Histidine--tRNA ligase">
    <location>
        <begin position="1"/>
        <end position="428"/>
    </location>
</feature>
<protein>
    <recommendedName>
        <fullName evidence="1">Histidine--tRNA ligase</fullName>
        <ecNumber evidence="1">6.1.1.21</ecNumber>
    </recommendedName>
    <alternativeName>
        <fullName evidence="1">Histidyl-tRNA synthetase</fullName>
        <shortName evidence="1">HisRS</shortName>
    </alternativeName>
</protein>
<keyword id="KW-0030">Aminoacyl-tRNA synthetase</keyword>
<keyword id="KW-0067">ATP-binding</keyword>
<keyword id="KW-0963">Cytoplasm</keyword>
<keyword id="KW-0436">Ligase</keyword>
<keyword id="KW-0547">Nucleotide-binding</keyword>
<keyword id="KW-0648">Protein biosynthesis</keyword>
<keyword id="KW-1185">Reference proteome</keyword>
<accession>A9F907</accession>
<sequence length="428" mass="47243">MELRAVRGMNDILPEEVERWHKLEGAFRLHAELHGYAEVRTPLLEPTELFRHQMGETTDVVEKEMYSFERHGDHLTVRPEGTAGAARAYVEHAVHAKEPVTRWYYLGPMFRGERPAKGRYRQFYQAGCELFGDPGPLCDAETIDLVAGFLQRIGVGEFVVHVNSLGSAGTRERYREALLAHYTPRKAELSEDSQRRLEKNPLRILDSKDQRDHEVSRDAPSILDLLDDADRAHWDGVRRCLDVLGVNYVVDRSLVRGLDYYTRTLFEVKATAGDLGAQSTLAGGGRYDAMVAGLGGPSVPAIGFAMGMERLLTMMPGASPRRRPGCFLAPLGQSGADQALVLAKQLRALGVPVELDGRGGRLKAMLRRADSLGARLCVILGDAEIERGVLQIKDLVAHVQEEIPLEGAARVLADRALEAPPGGQRGAR</sequence>
<evidence type="ECO:0000255" key="1">
    <source>
        <dbReference type="HAMAP-Rule" id="MF_00127"/>
    </source>
</evidence>
<reference key="1">
    <citation type="journal article" date="2007" name="Nat. Biotechnol.">
        <title>Complete genome sequence of the myxobacterium Sorangium cellulosum.</title>
        <authorList>
            <person name="Schneiker S."/>
            <person name="Perlova O."/>
            <person name="Kaiser O."/>
            <person name="Gerth K."/>
            <person name="Alici A."/>
            <person name="Altmeyer M.O."/>
            <person name="Bartels D."/>
            <person name="Bekel T."/>
            <person name="Beyer S."/>
            <person name="Bode E."/>
            <person name="Bode H.B."/>
            <person name="Bolten C.J."/>
            <person name="Choudhuri J.V."/>
            <person name="Doss S."/>
            <person name="Elnakady Y.A."/>
            <person name="Frank B."/>
            <person name="Gaigalat L."/>
            <person name="Goesmann A."/>
            <person name="Groeger C."/>
            <person name="Gross F."/>
            <person name="Jelsbak L."/>
            <person name="Jelsbak L."/>
            <person name="Kalinowski J."/>
            <person name="Kegler C."/>
            <person name="Knauber T."/>
            <person name="Konietzny S."/>
            <person name="Kopp M."/>
            <person name="Krause L."/>
            <person name="Krug D."/>
            <person name="Linke B."/>
            <person name="Mahmud T."/>
            <person name="Martinez-Arias R."/>
            <person name="McHardy A.C."/>
            <person name="Merai M."/>
            <person name="Meyer F."/>
            <person name="Mormann S."/>
            <person name="Munoz-Dorado J."/>
            <person name="Perez J."/>
            <person name="Pradella S."/>
            <person name="Rachid S."/>
            <person name="Raddatz G."/>
            <person name="Rosenau F."/>
            <person name="Rueckert C."/>
            <person name="Sasse F."/>
            <person name="Scharfe M."/>
            <person name="Schuster S.C."/>
            <person name="Suen G."/>
            <person name="Treuner-Lange A."/>
            <person name="Velicer G.J."/>
            <person name="Vorholter F.-J."/>
            <person name="Weissman K.J."/>
            <person name="Welch R.D."/>
            <person name="Wenzel S.C."/>
            <person name="Whitworth D.E."/>
            <person name="Wilhelm S."/>
            <person name="Wittmann C."/>
            <person name="Bloecker H."/>
            <person name="Puehler A."/>
            <person name="Mueller R."/>
        </authorList>
    </citation>
    <scope>NUCLEOTIDE SEQUENCE [LARGE SCALE GENOMIC DNA]</scope>
    <source>
        <strain>So ce56</strain>
    </source>
</reference>
<organism>
    <name type="scientific">Sorangium cellulosum (strain So ce56)</name>
    <name type="common">Polyangium cellulosum (strain So ce56)</name>
    <dbReference type="NCBI Taxonomy" id="448385"/>
    <lineage>
        <taxon>Bacteria</taxon>
        <taxon>Pseudomonadati</taxon>
        <taxon>Myxococcota</taxon>
        <taxon>Polyangia</taxon>
        <taxon>Polyangiales</taxon>
        <taxon>Polyangiaceae</taxon>
        <taxon>Sorangium</taxon>
    </lineage>
</organism>